<reference key="1">
    <citation type="submission" date="2009-01" db="EMBL/GenBank/DDBJ databases">
        <title>Complete sequence of Diaphorobacter sp. TPSY.</title>
        <authorList>
            <consortium name="US DOE Joint Genome Institute"/>
            <person name="Lucas S."/>
            <person name="Copeland A."/>
            <person name="Lapidus A."/>
            <person name="Glavina del Rio T."/>
            <person name="Tice H."/>
            <person name="Bruce D."/>
            <person name="Goodwin L."/>
            <person name="Pitluck S."/>
            <person name="Chertkov O."/>
            <person name="Brettin T."/>
            <person name="Detter J.C."/>
            <person name="Han C."/>
            <person name="Larimer F."/>
            <person name="Land M."/>
            <person name="Hauser L."/>
            <person name="Kyrpides N."/>
            <person name="Mikhailova N."/>
            <person name="Coates J.D."/>
        </authorList>
    </citation>
    <scope>NUCLEOTIDE SEQUENCE [LARGE SCALE GENOMIC DNA]</scope>
    <source>
        <strain>TPSY</strain>
    </source>
</reference>
<sequence>MAARRIADEPAYVLHSYDWSDSSLILETFTRHYGRVALVAKGAKKPTSNFRPVLLPLQPLRVTYTLGGEGHGEIHALKGAEWAGGHVMPTGDALLSGLYLNELLLRLLAREDTHAPLFDTYAGVVRVLATVDHEGEHGDALEPVLRSFELLLLREIGLLPGLDAETSTLAPLHAAARYALVPEAGLRPALSADRAALSGGQWLALQGALDEPARYTATLRAIATAEAPVAADLKTQLRALLQYHCGSPLLRTRQLMMDLQKL</sequence>
<gene>
    <name evidence="1" type="primary">recO</name>
    <name type="ordered locus">Dtpsy_2618</name>
</gene>
<dbReference type="EMBL" id="CP001392">
    <property type="protein sequence ID" value="ACM34053.1"/>
    <property type="molecule type" value="Genomic_DNA"/>
</dbReference>
<dbReference type="RefSeq" id="WP_015913967.1">
    <property type="nucleotide sequence ID" value="NC_011992.1"/>
</dbReference>
<dbReference type="SMR" id="B9MDP4"/>
<dbReference type="KEGG" id="dia:Dtpsy_2618"/>
<dbReference type="eggNOG" id="COG1381">
    <property type="taxonomic scope" value="Bacteria"/>
</dbReference>
<dbReference type="HOGENOM" id="CLU_066645_0_0_4"/>
<dbReference type="Proteomes" id="UP000000450">
    <property type="component" value="Chromosome"/>
</dbReference>
<dbReference type="GO" id="GO:0043590">
    <property type="term" value="C:bacterial nucleoid"/>
    <property type="evidence" value="ECO:0007669"/>
    <property type="project" value="TreeGrafter"/>
</dbReference>
<dbReference type="GO" id="GO:0006310">
    <property type="term" value="P:DNA recombination"/>
    <property type="evidence" value="ECO:0007669"/>
    <property type="project" value="UniProtKB-UniRule"/>
</dbReference>
<dbReference type="GO" id="GO:0006302">
    <property type="term" value="P:double-strand break repair"/>
    <property type="evidence" value="ECO:0007669"/>
    <property type="project" value="TreeGrafter"/>
</dbReference>
<dbReference type="Gene3D" id="2.40.50.140">
    <property type="entry name" value="Nucleic acid-binding proteins"/>
    <property type="match status" value="1"/>
</dbReference>
<dbReference type="Gene3D" id="1.20.1440.120">
    <property type="entry name" value="Recombination protein O, C-terminal domain"/>
    <property type="match status" value="1"/>
</dbReference>
<dbReference type="HAMAP" id="MF_00201">
    <property type="entry name" value="RecO"/>
    <property type="match status" value="1"/>
</dbReference>
<dbReference type="InterPro" id="IPR022572">
    <property type="entry name" value="DNA_rep/recomb_RecO_N"/>
</dbReference>
<dbReference type="InterPro" id="IPR012340">
    <property type="entry name" value="NA-bd_OB-fold"/>
</dbReference>
<dbReference type="InterPro" id="IPR003717">
    <property type="entry name" value="RecO"/>
</dbReference>
<dbReference type="InterPro" id="IPR042242">
    <property type="entry name" value="RecO_C"/>
</dbReference>
<dbReference type="NCBIfam" id="TIGR00613">
    <property type="entry name" value="reco"/>
    <property type="match status" value="1"/>
</dbReference>
<dbReference type="PANTHER" id="PTHR33991">
    <property type="entry name" value="DNA REPAIR PROTEIN RECO"/>
    <property type="match status" value="1"/>
</dbReference>
<dbReference type="PANTHER" id="PTHR33991:SF1">
    <property type="entry name" value="DNA REPAIR PROTEIN RECO"/>
    <property type="match status" value="1"/>
</dbReference>
<dbReference type="Pfam" id="PF02565">
    <property type="entry name" value="RecO_C"/>
    <property type="match status" value="1"/>
</dbReference>
<dbReference type="Pfam" id="PF11967">
    <property type="entry name" value="RecO_N"/>
    <property type="match status" value="1"/>
</dbReference>
<dbReference type="SUPFAM" id="SSF50249">
    <property type="entry name" value="Nucleic acid-binding proteins"/>
    <property type="match status" value="1"/>
</dbReference>
<evidence type="ECO:0000255" key="1">
    <source>
        <dbReference type="HAMAP-Rule" id="MF_00201"/>
    </source>
</evidence>
<protein>
    <recommendedName>
        <fullName evidence="1">DNA repair protein RecO</fullName>
    </recommendedName>
    <alternativeName>
        <fullName evidence="1">Recombination protein O</fullName>
    </alternativeName>
</protein>
<accession>B9MDP4</accession>
<comment type="function">
    <text evidence="1">Involved in DNA repair and RecF pathway recombination.</text>
</comment>
<comment type="similarity">
    <text evidence="1">Belongs to the RecO family.</text>
</comment>
<name>RECO_ACIET</name>
<feature type="chain" id="PRO_1000193374" description="DNA repair protein RecO">
    <location>
        <begin position="1"/>
        <end position="262"/>
    </location>
</feature>
<organism>
    <name type="scientific">Acidovorax ebreus (strain TPSY)</name>
    <name type="common">Diaphorobacter sp. (strain TPSY)</name>
    <dbReference type="NCBI Taxonomy" id="535289"/>
    <lineage>
        <taxon>Bacteria</taxon>
        <taxon>Pseudomonadati</taxon>
        <taxon>Pseudomonadota</taxon>
        <taxon>Betaproteobacteria</taxon>
        <taxon>Burkholderiales</taxon>
        <taxon>Comamonadaceae</taxon>
        <taxon>Diaphorobacter</taxon>
    </lineage>
</organism>
<proteinExistence type="inferred from homology"/>
<keyword id="KW-0227">DNA damage</keyword>
<keyword id="KW-0233">DNA recombination</keyword>
<keyword id="KW-0234">DNA repair</keyword>
<keyword id="KW-1185">Reference proteome</keyword>